<feature type="chain" id="PRO_0000416560" description="Basic leucine zipper 63">
    <location>
        <begin position="1"/>
        <end position="314"/>
    </location>
</feature>
<feature type="domain" description="bZIP" evidence="2">
    <location>
        <begin position="151"/>
        <end position="214"/>
    </location>
</feature>
<feature type="region of interest" description="Disordered" evidence="3">
    <location>
        <begin position="94"/>
        <end position="177"/>
    </location>
</feature>
<feature type="region of interest" description="Basic motif" evidence="2">
    <location>
        <begin position="153"/>
        <end position="172"/>
    </location>
</feature>
<feature type="region of interest" description="Leucine-zipper" evidence="2">
    <location>
        <begin position="179"/>
        <end position="193"/>
    </location>
</feature>
<feature type="region of interest" description="Disordered" evidence="3">
    <location>
        <begin position="253"/>
        <end position="274"/>
    </location>
</feature>
<feature type="short sequence motif" description="Nuclear localization signal 1" evidence="1">
    <location>
        <begin position="155"/>
        <end position="162"/>
    </location>
</feature>
<feature type="short sequence motif" description="Nuclear localization signal 2" evidence="1">
    <location>
        <begin position="295"/>
        <end position="302"/>
    </location>
</feature>
<feature type="compositionally biased region" description="Polar residues" evidence="3">
    <location>
        <begin position="96"/>
        <end position="133"/>
    </location>
</feature>
<feature type="modified residue" description="Phosphoserine; by KIN10" evidence="12">
    <location>
        <position position="29"/>
    </location>
</feature>
<feature type="modified residue" description="Phosphoserine; by KIN10" evidence="12">
    <location>
        <position position="294"/>
    </location>
</feature>
<feature type="modified residue" description="Phosphoserine; by KIN10" evidence="12">
    <location>
        <position position="300"/>
    </location>
</feature>
<feature type="splice variant" id="VSP_042641" description="In isoform 2." evidence="14">
    <location>
        <begin position="90"/>
        <end position="96"/>
    </location>
</feature>
<feature type="splice variant" id="VSP_042642" description="In isoform 3." evidence="15">
    <original>MAEETVKRLTGFNPMFHNMPQIVS</original>
    <variation>YFLLSLCLPKLAIEACLFLAGENG</variation>
    <location>
        <begin position="227"/>
        <end position="250"/>
    </location>
</feature>
<feature type="splice variant" id="VSP_042643" description="In isoform 3." evidence="15">
    <location>
        <begin position="251"/>
        <end position="314"/>
    </location>
</feature>
<feature type="mutagenesis site" description="Reduces its activity. Abolishes the formation of the BZIP2-BZIP63 heterodimer; when associated with A-294 and A-300." evidence="12 13">
    <original>S</original>
    <variation>A</variation>
    <location>
        <position position="29"/>
    </location>
</feature>
<feature type="mutagenesis site" description="Normal DNA-binding." evidence="10">
    <original>S</original>
    <variation>A</variation>
    <location>
        <position position="160"/>
    </location>
</feature>
<feature type="mutagenesis site" description="Reduced DNA-binding to C-box motif." evidence="10">
    <original>S</original>
    <variation>D</variation>
    <location>
        <position position="160"/>
    </location>
</feature>
<feature type="mutagenesis site" description="Normal DNA-binding." evidence="10">
    <original>S</original>
    <variation>A</variation>
    <location>
        <position position="164"/>
    </location>
</feature>
<feature type="mutagenesis site" description="Impaired DNA-binding to C-box motif." evidence="10">
    <original>S</original>
    <variation>D</variation>
    <location>
        <position position="164"/>
    </location>
</feature>
<feature type="mutagenesis site" description="Normal DNA-binding." evidence="10">
    <original>S</original>
    <variation>A</variation>
    <location>
        <position position="168"/>
    </location>
</feature>
<feature type="mutagenesis site" description="Impaired DNA-binding to C-box motif." evidence="10">
    <original>S</original>
    <variation>D</variation>
    <location>
        <position position="168"/>
    </location>
</feature>
<feature type="mutagenesis site" description="Reduces activity. Abolishes the formation of the BZIP2-BZIP63 heterodimer; when associated with A-29 and A-300." evidence="12 13">
    <original>S</original>
    <variation>A</variation>
    <location>
        <position position="294"/>
    </location>
</feature>
<feature type="mutagenesis site" description="Reduces activity. Abolishes the formation of the BZIP2-BZIP63 heterodimer; when associated with A-29 and A-294." evidence="12 13">
    <original>S</original>
    <variation>A</variation>
    <location>
        <position position="300"/>
    </location>
</feature>
<comment type="function">
    <text evidence="12 13">Transcription factor involved in controlling responses to starvation (PubMed:26263501). BZIP2-BZIP63-KIN10 complex binds to the ETFQO promoter to up-regulate its transcription (PubMed:29348240).</text>
</comment>
<comment type="activity regulation">
    <text evidence="12">Up-regulated by KIN10 under a phosphorylation-dependent manner.</text>
</comment>
<comment type="subunit">
    <text evidence="5 6 7 11 12 13">Homodimer. Forms a heterodimer with LSD1, BZIP1, BZIP2, BZIP9, BZIP10, BZIP11, BZIP25, BZIP44 and BZIP53. Interacts with KIN10 and SNF4 (PubMed:26263501). Component of a ternary complex composed of BZIP2-BZIP63 heterodimer and KIN10 (PubMed:29348240).</text>
</comment>
<comment type="interaction">
    <interactant intactId="EBI-942713">
        <id>B9DGI8</id>
    </interactant>
    <interactant intactId="EBI-540923">
        <id>O22286</id>
        <label>BPM3</label>
    </interactant>
    <organismsDiffer>false</organismsDiffer>
    <experiments>3</experiments>
</comment>
<comment type="interaction">
    <interactant intactId="EBI-942713">
        <id>B9DGI8</id>
    </interactant>
    <interactant intactId="EBI-942623">
        <id>Q9FGX2</id>
        <label>BZIP1</label>
    </interactant>
    <organismsDiffer>false</organismsDiffer>
    <experiments>4</experiments>
</comment>
<comment type="interaction">
    <interactant intactId="EBI-942713">
        <id>B9DGI8</id>
    </interactant>
    <interactant intactId="EBI-942769">
        <id>O65683</id>
        <label>BZIP11</label>
    </interactant>
    <organismsDiffer>false</organismsDiffer>
    <experiments>4</experiments>
</comment>
<comment type="interaction">
    <interactant intactId="EBI-942713">
        <id>B9DGI8</id>
    </interactant>
    <interactant intactId="EBI-942735">
        <id>Q9SI15</id>
        <label>BZIP2</label>
    </interactant>
    <organismsDiffer>false</organismsDiffer>
    <experiments>4</experiments>
</comment>
<comment type="interaction">
    <interactant intactId="EBI-942713">
        <id>B9DGI8</id>
    </interactant>
    <interactant intactId="EBI-942804">
        <id>C0Z2L5</id>
        <label>BZIP44</label>
    </interactant>
    <organismsDiffer>false</organismsDiffer>
    <experiments>4</experiments>
</comment>
<comment type="interaction">
    <interactant intactId="EBI-942713">
        <id>B9DGI8</id>
    </interactant>
    <interactant intactId="EBI-942845">
        <id>Q9LZP8</id>
        <label>BZIP53</label>
    </interactant>
    <organismsDiffer>false</organismsDiffer>
    <experiments>8</experiments>
</comment>
<comment type="interaction">
    <interactant intactId="EBI-942713">
        <id>B9DGI8</id>
    </interactant>
    <interactant intactId="EBI-942713">
        <id>B9DGI8</id>
        <label>BZIP63</label>
    </interactant>
    <organismsDiffer>false</organismsDiffer>
    <experiments>2</experiments>
</comment>
<comment type="interaction">
    <interactant intactId="EBI-942713">
        <id>B9DGI8</id>
    </interactant>
    <interactant intactId="EBI-963606">
        <id>Q9LQT8</id>
        <label>GAI</label>
    </interactant>
    <organismsDiffer>false</organismsDiffer>
    <experiments>3</experiments>
</comment>
<comment type="interaction">
    <interactant intactId="EBI-942713">
        <id>B9DGI8</id>
    </interactant>
    <interactant intactId="EBI-963665">
        <id>Q8GXW1</id>
        <label>RGL2</label>
    </interactant>
    <organismsDiffer>false</organismsDiffer>
    <experiments>5</experiments>
</comment>
<comment type="interaction">
    <interactant intactId="EBI-942713">
        <id>B9DGI8</id>
    </interactant>
    <interactant intactId="EBI-15681313">
        <id>Q9LF53</id>
        <label>RGL3</label>
    </interactant>
    <organismsDiffer>false</organismsDiffer>
    <experiments>3</experiments>
</comment>
<comment type="interaction">
    <interactant intactId="EBI-15191817">
        <id>B9DGI8-2</id>
    </interactant>
    <interactant intactId="EBI-15192249">
        <id>C0SUZ3</id>
        <label>At1g35490</label>
    </interactant>
    <organismsDiffer>false</organismsDiffer>
    <experiments>3</experiments>
</comment>
<comment type="interaction">
    <interactant intactId="EBI-15191817">
        <id>B9DGI8-2</id>
    </interactant>
    <interactant intactId="EBI-15191815">
        <id>O22763-3</id>
        <label>BZIP10</label>
    </interactant>
    <organismsDiffer>false</organismsDiffer>
    <experiments>3</experiments>
</comment>
<comment type="interaction">
    <interactant intactId="EBI-15191817">
        <id>B9DGI8-2</id>
    </interactant>
    <interactant intactId="EBI-942804">
        <id>C0Z2L5</id>
        <label>BZIP44</label>
    </interactant>
    <organismsDiffer>false</organismsDiffer>
    <experiments>3</experiments>
</comment>
<comment type="interaction">
    <interactant intactId="EBI-15191817">
        <id>B9DGI8-2</id>
    </interactant>
    <interactant intactId="EBI-3133475">
        <id>O81002</id>
        <label>BZIP6</label>
    </interactant>
    <organismsDiffer>false</organismsDiffer>
    <experiments>3</experiments>
</comment>
<comment type="interaction">
    <interactant intactId="EBI-15191817">
        <id>B9DGI8-2</id>
    </interactant>
    <interactant intactId="EBI-15197469">
        <id>Q9SSE5</id>
        <label>COL9</label>
    </interactant>
    <organismsDiffer>false</organismsDiffer>
    <experiments>3</experiments>
</comment>
<comment type="subcellular location">
    <subcellularLocation>
        <location evidence="2 8">Nucleus</location>
    </subcellularLocation>
</comment>
<comment type="alternative products">
    <event type="alternative splicing"/>
    <isoform>
        <id>B9DGI8-1</id>
        <name>1</name>
        <sequence type="displayed"/>
    </isoform>
    <isoform>
        <id>B9DGI8-2</id>
        <name>2</name>
        <sequence type="described" ref="VSP_042641"/>
    </isoform>
    <isoform>
        <id>B9DGI8-3</id>
        <name>3</name>
        <sequence type="described" ref="VSP_042642 VSP_042643"/>
    </isoform>
</comment>
<comment type="tissue specificity">
    <text evidence="4 9">Expressed in roots, shoots, young leaves, pollen, and flowers.</text>
</comment>
<comment type="developmental stage">
    <text evidence="9">Present in silique valves, vasculature and funiculi.</text>
</comment>
<comment type="induction">
    <text evidence="9">Strongly repressed by glucose.</text>
</comment>
<comment type="PTM">
    <text evidence="10 12">Phosphorylated. The phosphorylation at Ser-29, Ser-294 and Ser-300 by KIN10 strongly enhances its ability to form homo- as well as heterodimers and are then essential for its transcriptional activity (PubMed:26263501).</text>
</comment>
<comment type="disruption phenotype">
    <text evidence="12">Starvation-related phenotype with reduced growth and accumulation of anthocyanins.</text>
</comment>
<comment type="similarity">
    <text evidence="15">Belongs to the bZIP family.</text>
</comment>
<comment type="sequence caution" evidence="15">
    <conflict type="erroneous gene model prediction">
        <sequence resource="EMBL-CDS" id="AAF67360"/>
    </conflict>
</comment>
<comment type="sequence caution" evidence="15">
    <conflict type="erroneous initiation">
        <sequence resource="EMBL-CDS" id="CAC79656"/>
    </conflict>
    <text>Truncated N-terminus.</text>
</comment>
<dbReference type="EMBL" id="AF262041">
    <property type="protein sequence ID" value="AAF67360.1"/>
    <property type="status" value="ALT_SEQ"/>
    <property type="molecule type" value="Genomic_DNA"/>
</dbReference>
<dbReference type="EMBL" id="CP002688">
    <property type="protein sequence ID" value="AED93832.1"/>
    <property type="molecule type" value="Genomic_DNA"/>
</dbReference>
<dbReference type="EMBL" id="CP002688">
    <property type="protein sequence ID" value="AED93833.1"/>
    <property type="molecule type" value="Genomic_DNA"/>
</dbReference>
<dbReference type="EMBL" id="CP002688">
    <property type="protein sequence ID" value="AED93834.1"/>
    <property type="molecule type" value="Genomic_DNA"/>
</dbReference>
<dbReference type="EMBL" id="AF446876">
    <property type="protein sequence ID" value="AAL38609.1"/>
    <property type="molecule type" value="mRNA"/>
</dbReference>
<dbReference type="EMBL" id="AY052688">
    <property type="protein sequence ID" value="AAK96592.1"/>
    <property type="molecule type" value="mRNA"/>
</dbReference>
<dbReference type="EMBL" id="AK317169">
    <property type="protein sequence ID" value="BAH19855.1"/>
    <property type="molecule type" value="mRNA"/>
</dbReference>
<dbReference type="EMBL" id="AF310224">
    <property type="protein sequence ID" value="AAG25729.1"/>
    <property type="molecule type" value="mRNA"/>
</dbReference>
<dbReference type="EMBL" id="AJ010858">
    <property type="protein sequence ID" value="CAC79656.1"/>
    <property type="status" value="ALT_INIT"/>
    <property type="molecule type" value="mRNA"/>
</dbReference>
<dbReference type="RefSeq" id="NP_001031962.1">
    <molecule id="B9DGI8-3"/>
    <property type="nucleotide sequence ID" value="NM_001036885.2"/>
</dbReference>
<dbReference type="RefSeq" id="NP_568508.2">
    <molecule id="B9DGI8-1"/>
    <property type="nucleotide sequence ID" value="NM_122760.4"/>
</dbReference>
<dbReference type="RefSeq" id="NP_851088.1">
    <molecule id="B9DGI8-2"/>
    <property type="nucleotide sequence ID" value="NM_180757.3"/>
</dbReference>
<dbReference type="BioGRID" id="18262">
    <property type="interactions" value="34"/>
</dbReference>
<dbReference type="FunCoup" id="B9DGI8">
    <property type="interactions" value="291"/>
</dbReference>
<dbReference type="IntAct" id="B9DGI8">
    <property type="interactions" value="32"/>
</dbReference>
<dbReference type="MINT" id="B9DGI8"/>
<dbReference type="STRING" id="3702.B9DGI8"/>
<dbReference type="iPTMnet" id="B9DGI8"/>
<dbReference type="PaxDb" id="3702-AT5G28770.2"/>
<dbReference type="ProteomicsDB" id="240445">
    <molecule id="B9DGI8-1"/>
</dbReference>
<dbReference type="EnsemblPlants" id="AT5G28770.1">
    <molecule id="B9DGI8-2"/>
    <property type="protein sequence ID" value="AT5G28770.1"/>
    <property type="gene ID" value="AT5G28770"/>
</dbReference>
<dbReference type="EnsemblPlants" id="AT5G28770.2">
    <molecule id="B9DGI8-1"/>
    <property type="protein sequence ID" value="AT5G28770.2"/>
    <property type="gene ID" value="AT5G28770"/>
</dbReference>
<dbReference type="EnsemblPlants" id="AT5G28770.3">
    <molecule id="B9DGI8-3"/>
    <property type="protein sequence ID" value="AT5G28770.3"/>
    <property type="gene ID" value="AT5G28770"/>
</dbReference>
<dbReference type="GeneID" id="832990"/>
<dbReference type="Gramene" id="AT5G28770.1">
    <molecule id="B9DGI8-2"/>
    <property type="protein sequence ID" value="AT5G28770.1"/>
    <property type="gene ID" value="AT5G28770"/>
</dbReference>
<dbReference type="Gramene" id="AT5G28770.2">
    <molecule id="B9DGI8-1"/>
    <property type="protein sequence ID" value="AT5G28770.2"/>
    <property type="gene ID" value="AT5G28770"/>
</dbReference>
<dbReference type="Gramene" id="AT5G28770.3">
    <molecule id="B9DGI8-3"/>
    <property type="protein sequence ID" value="AT5G28770.3"/>
    <property type="gene ID" value="AT5G28770"/>
</dbReference>
<dbReference type="KEGG" id="ath:AT5G28770"/>
<dbReference type="Araport" id="AT5G28770"/>
<dbReference type="TAIR" id="AT5G28770">
    <property type="gene designation" value="BZO2H3"/>
</dbReference>
<dbReference type="eggNOG" id="ENOG502QS0A">
    <property type="taxonomic scope" value="Eukaryota"/>
</dbReference>
<dbReference type="InParanoid" id="B9DGI8"/>
<dbReference type="OMA" id="EISTMGM"/>
<dbReference type="PhylomeDB" id="B9DGI8"/>
<dbReference type="PRO" id="PR:B9DGI8"/>
<dbReference type="Proteomes" id="UP000006548">
    <property type="component" value="Chromosome 5"/>
</dbReference>
<dbReference type="ExpressionAtlas" id="B9DGI8">
    <property type="expression patterns" value="baseline and differential"/>
</dbReference>
<dbReference type="GO" id="GO:0005634">
    <property type="term" value="C:nucleus"/>
    <property type="evidence" value="ECO:0000314"/>
    <property type="project" value="UniProtKB"/>
</dbReference>
<dbReference type="GO" id="GO:0003677">
    <property type="term" value="F:DNA binding"/>
    <property type="evidence" value="ECO:0007669"/>
    <property type="project" value="UniProtKB-KW"/>
</dbReference>
<dbReference type="GO" id="GO:0003700">
    <property type="term" value="F:DNA-binding transcription factor activity"/>
    <property type="evidence" value="ECO:0000250"/>
    <property type="project" value="TAIR"/>
</dbReference>
<dbReference type="GO" id="GO:0042802">
    <property type="term" value="F:identical protein binding"/>
    <property type="evidence" value="ECO:0000353"/>
    <property type="project" value="IntAct"/>
</dbReference>
<dbReference type="GO" id="GO:0019900">
    <property type="term" value="F:kinase binding"/>
    <property type="evidence" value="ECO:0000353"/>
    <property type="project" value="UniProtKB"/>
</dbReference>
<dbReference type="GO" id="GO:0046982">
    <property type="term" value="F:protein heterodimerization activity"/>
    <property type="evidence" value="ECO:0000353"/>
    <property type="project" value="UniProtKB"/>
</dbReference>
<dbReference type="GO" id="GO:0071215">
    <property type="term" value="P:cellular response to abscisic acid stimulus"/>
    <property type="evidence" value="ECO:0000270"/>
    <property type="project" value="TAIR"/>
</dbReference>
<dbReference type="GO" id="GO:0071333">
    <property type="term" value="P:cellular response to glucose stimulus"/>
    <property type="evidence" value="ECO:0000270"/>
    <property type="project" value="UniProtKB"/>
</dbReference>
<dbReference type="GO" id="GO:0009267">
    <property type="term" value="P:cellular response to starvation"/>
    <property type="evidence" value="ECO:0000315"/>
    <property type="project" value="UniProtKB"/>
</dbReference>
<dbReference type="GO" id="GO:0009649">
    <property type="term" value="P:entrainment of circadian clock"/>
    <property type="evidence" value="ECO:0000315"/>
    <property type="project" value="TAIR"/>
</dbReference>
<dbReference type="FunFam" id="1.20.5.170:FF:000020">
    <property type="entry name" value="BZIP transcription factor"/>
    <property type="match status" value="1"/>
</dbReference>
<dbReference type="Gene3D" id="1.20.5.170">
    <property type="match status" value="1"/>
</dbReference>
<dbReference type="InterPro" id="IPR020983">
    <property type="entry name" value="Basic_leucine-zipper_C"/>
</dbReference>
<dbReference type="InterPro" id="IPR004827">
    <property type="entry name" value="bZIP"/>
</dbReference>
<dbReference type="InterPro" id="IPR046347">
    <property type="entry name" value="bZIP_sf"/>
</dbReference>
<dbReference type="PANTHER" id="PTHR46408">
    <property type="entry name" value="BASIC LEUCINE ZIPPER 63"/>
    <property type="match status" value="1"/>
</dbReference>
<dbReference type="PANTHER" id="PTHR46408:SF10">
    <property type="entry name" value="BASIC LEUCINE ZIPPER 63"/>
    <property type="match status" value="1"/>
</dbReference>
<dbReference type="Pfam" id="PF00170">
    <property type="entry name" value="bZIP_1"/>
    <property type="match status" value="1"/>
</dbReference>
<dbReference type="Pfam" id="PF12498">
    <property type="entry name" value="bZIP_C"/>
    <property type="match status" value="2"/>
</dbReference>
<dbReference type="SMART" id="SM00338">
    <property type="entry name" value="BRLZ"/>
    <property type="match status" value="1"/>
</dbReference>
<dbReference type="SUPFAM" id="SSF57959">
    <property type="entry name" value="Leucine zipper domain"/>
    <property type="match status" value="1"/>
</dbReference>
<dbReference type="PROSITE" id="PS50217">
    <property type="entry name" value="BZIP"/>
    <property type="match status" value="1"/>
</dbReference>
<dbReference type="PROSITE" id="PS00036">
    <property type="entry name" value="BZIP_BASIC"/>
    <property type="match status" value="1"/>
</dbReference>
<accession>B9DGI8</accession>
<accession>F4KA11</accession>
<accession>Q712P1</accession>
<accession>Q940U4</accession>
<accession>Q9FUD2</accession>
<accession>Q9LKT9</accession>
<gene>
    <name type="primary">BZIP63</name>
    <name type="synonym">BZO2H3</name>
    <name type="ordered locus">At5g28770</name>
    <name type="ORF">T32B20.4</name>
</gene>
<reference key="1">
    <citation type="journal article" date="2000" name="Nature">
        <title>Sequence and analysis of chromosome 5 of the plant Arabidopsis thaliana.</title>
        <authorList>
            <person name="Tabata S."/>
            <person name="Kaneko T."/>
            <person name="Nakamura Y."/>
            <person name="Kotani H."/>
            <person name="Kato T."/>
            <person name="Asamizu E."/>
            <person name="Miyajima N."/>
            <person name="Sasamoto S."/>
            <person name="Kimura T."/>
            <person name="Hosouchi T."/>
            <person name="Kawashima K."/>
            <person name="Kohara M."/>
            <person name="Matsumoto M."/>
            <person name="Matsuno A."/>
            <person name="Muraki A."/>
            <person name="Nakayama S."/>
            <person name="Nakazaki N."/>
            <person name="Naruo K."/>
            <person name="Okumura S."/>
            <person name="Shinpo S."/>
            <person name="Takeuchi C."/>
            <person name="Wada T."/>
            <person name="Watanabe A."/>
            <person name="Yamada M."/>
            <person name="Yasuda M."/>
            <person name="Sato S."/>
            <person name="de la Bastide M."/>
            <person name="Huang E."/>
            <person name="Spiegel L."/>
            <person name="Gnoj L."/>
            <person name="O'Shaughnessy A."/>
            <person name="Preston R."/>
            <person name="Habermann K."/>
            <person name="Murray J."/>
            <person name="Johnson D."/>
            <person name="Rohlfing T."/>
            <person name="Nelson J."/>
            <person name="Stoneking T."/>
            <person name="Pepin K."/>
            <person name="Spieth J."/>
            <person name="Sekhon M."/>
            <person name="Armstrong J."/>
            <person name="Becker M."/>
            <person name="Belter E."/>
            <person name="Cordum H."/>
            <person name="Cordes M."/>
            <person name="Courtney L."/>
            <person name="Courtney W."/>
            <person name="Dante M."/>
            <person name="Du H."/>
            <person name="Edwards J."/>
            <person name="Fryman J."/>
            <person name="Haakensen B."/>
            <person name="Lamar E."/>
            <person name="Latreille P."/>
            <person name="Leonard S."/>
            <person name="Meyer R."/>
            <person name="Mulvaney E."/>
            <person name="Ozersky P."/>
            <person name="Riley A."/>
            <person name="Strowmatt C."/>
            <person name="Wagner-McPherson C."/>
            <person name="Wollam A."/>
            <person name="Yoakum M."/>
            <person name="Bell M."/>
            <person name="Dedhia N."/>
            <person name="Parnell L."/>
            <person name="Shah R."/>
            <person name="Rodriguez M."/>
            <person name="Hoon See L."/>
            <person name="Vil D."/>
            <person name="Baker J."/>
            <person name="Kirchoff K."/>
            <person name="Toth K."/>
            <person name="King L."/>
            <person name="Bahret A."/>
            <person name="Miller B."/>
            <person name="Marra M.A."/>
            <person name="Martienssen R."/>
            <person name="McCombie W.R."/>
            <person name="Wilson R.K."/>
            <person name="Murphy G."/>
            <person name="Bancroft I."/>
            <person name="Volckaert G."/>
            <person name="Wambutt R."/>
            <person name="Duesterhoeft A."/>
            <person name="Stiekema W."/>
            <person name="Pohl T."/>
            <person name="Entian K.-D."/>
            <person name="Terryn N."/>
            <person name="Hartley N."/>
            <person name="Bent E."/>
            <person name="Johnson S."/>
            <person name="Langham S.-A."/>
            <person name="McCullagh B."/>
            <person name="Robben J."/>
            <person name="Grymonprez B."/>
            <person name="Zimmermann W."/>
            <person name="Ramsperger U."/>
            <person name="Wedler H."/>
            <person name="Balke K."/>
            <person name="Wedler E."/>
            <person name="Peters S."/>
            <person name="van Staveren M."/>
            <person name="Dirkse W."/>
            <person name="Mooijman P."/>
            <person name="Klein Lankhorst R."/>
            <person name="Weitzenegger T."/>
            <person name="Bothe G."/>
            <person name="Rose M."/>
            <person name="Hauf J."/>
            <person name="Berneiser S."/>
            <person name="Hempel S."/>
            <person name="Feldpausch M."/>
            <person name="Lamberth S."/>
            <person name="Villarroel R."/>
            <person name="Gielen J."/>
            <person name="Ardiles W."/>
            <person name="Bents O."/>
            <person name="Lemcke K."/>
            <person name="Kolesov G."/>
            <person name="Mayer K.F.X."/>
            <person name="Rudd S."/>
            <person name="Schoof H."/>
            <person name="Schueller C."/>
            <person name="Zaccaria P."/>
            <person name="Mewes H.-W."/>
            <person name="Bevan M."/>
            <person name="Fransz P.F."/>
        </authorList>
    </citation>
    <scope>NUCLEOTIDE SEQUENCE [LARGE SCALE GENOMIC DNA]</scope>
    <source>
        <strain>cv. Columbia</strain>
    </source>
</reference>
<reference key="2">
    <citation type="journal article" date="2017" name="Plant J.">
        <title>Araport11: a complete reannotation of the Arabidopsis thaliana reference genome.</title>
        <authorList>
            <person name="Cheng C.Y."/>
            <person name="Krishnakumar V."/>
            <person name="Chan A.P."/>
            <person name="Thibaud-Nissen F."/>
            <person name="Schobel S."/>
            <person name="Town C.D."/>
        </authorList>
    </citation>
    <scope>GENOME REANNOTATION</scope>
    <source>
        <strain>cv. Columbia</strain>
    </source>
</reference>
<reference key="3">
    <citation type="journal article" date="2003" name="Science">
        <title>Empirical analysis of transcriptional activity in the Arabidopsis genome.</title>
        <authorList>
            <person name="Yamada K."/>
            <person name="Lim J."/>
            <person name="Dale J.M."/>
            <person name="Chen H."/>
            <person name="Shinn P."/>
            <person name="Palm C.J."/>
            <person name="Southwick A.M."/>
            <person name="Wu H.C."/>
            <person name="Kim C.J."/>
            <person name="Nguyen M."/>
            <person name="Pham P.K."/>
            <person name="Cheuk R.F."/>
            <person name="Karlin-Newmann G."/>
            <person name="Liu S.X."/>
            <person name="Lam B."/>
            <person name="Sakano H."/>
            <person name="Wu T."/>
            <person name="Yu G."/>
            <person name="Miranda M."/>
            <person name="Quach H.L."/>
            <person name="Tripp M."/>
            <person name="Chang C.H."/>
            <person name="Lee J.M."/>
            <person name="Toriumi M.J."/>
            <person name="Chan M.M."/>
            <person name="Tang C.C."/>
            <person name="Onodera C.S."/>
            <person name="Deng J.M."/>
            <person name="Akiyama K."/>
            <person name="Ansari Y."/>
            <person name="Arakawa T."/>
            <person name="Banh J."/>
            <person name="Banno F."/>
            <person name="Bowser L."/>
            <person name="Brooks S.Y."/>
            <person name="Carninci P."/>
            <person name="Chao Q."/>
            <person name="Choy N."/>
            <person name="Enju A."/>
            <person name="Goldsmith A.D."/>
            <person name="Gurjal M."/>
            <person name="Hansen N.F."/>
            <person name="Hayashizaki Y."/>
            <person name="Johnson-Hopson C."/>
            <person name="Hsuan V.W."/>
            <person name="Iida K."/>
            <person name="Karnes M."/>
            <person name="Khan S."/>
            <person name="Koesema E."/>
            <person name="Ishida J."/>
            <person name="Jiang P.X."/>
            <person name="Jones T."/>
            <person name="Kawai J."/>
            <person name="Kamiya A."/>
            <person name="Meyers C."/>
            <person name="Nakajima M."/>
            <person name="Narusaka M."/>
            <person name="Seki M."/>
            <person name="Sakurai T."/>
            <person name="Satou M."/>
            <person name="Tamse R."/>
            <person name="Vaysberg M."/>
            <person name="Wallender E.K."/>
            <person name="Wong C."/>
            <person name="Yamamura Y."/>
            <person name="Yuan S."/>
            <person name="Shinozaki K."/>
            <person name="Davis R.W."/>
            <person name="Theologis A."/>
            <person name="Ecker J.R."/>
        </authorList>
    </citation>
    <scope>NUCLEOTIDE SEQUENCE [LARGE SCALE MRNA] (ISOFORM 2)</scope>
    <source>
        <strain>cv. Columbia</strain>
    </source>
</reference>
<reference key="4">
    <citation type="journal article" date="2009" name="DNA Res.">
        <title>Analysis of multiple occurrences of alternative splicing events in Arabidopsis thaliana using novel sequenced full-length cDNAs.</title>
        <authorList>
            <person name="Iida K."/>
            <person name="Fukami-Kobayashi K."/>
            <person name="Toyoda A."/>
            <person name="Sakaki Y."/>
            <person name="Kobayashi M."/>
            <person name="Seki M."/>
            <person name="Shinozaki K."/>
        </authorList>
    </citation>
    <scope>NUCLEOTIDE SEQUENCE [LARGE SCALE MRNA] (ISOFORM 1)</scope>
    <source>
        <strain>cv. Columbia</strain>
        <tissue>Rosette leaf</tissue>
    </source>
</reference>
<reference key="5">
    <citation type="journal article" date="2003" name="J. Mol. Evol.">
        <title>Evolutionary pattern of angiosperm bZIP factors homologous to the maize Opaque2 regulatory protein.</title>
        <authorList>
            <person name="Vincentz M."/>
            <person name="Bandeira-Kobarg C."/>
            <person name="Gauer L."/>
            <person name="Schloegl P."/>
            <person name="Leite A."/>
        </authorList>
    </citation>
    <scope>NUCLEOTIDE SEQUENCE [MRNA] OF 1-191 (ISOFORM 1/3)</scope>
    <scope>GENE FAMILY</scope>
    <source>
        <strain>cv. Columbia</strain>
    </source>
</reference>
<reference key="6">
    <citation type="journal article" date="2003" name="J. Biol. Chem.">
        <title>Synergistic activation of seed storage protein gene expression in Arabidopsis by ABI3 and two bZIPs related to OPAQUE2.</title>
        <authorList>
            <person name="Lara P."/>
            <person name="Onate-Sanchez L."/>
            <person name="Abraham Z."/>
            <person name="Ferrandiz C."/>
            <person name="Diaz I."/>
            <person name="Carbonero P."/>
            <person name="Vicente-Carbajosa J."/>
        </authorList>
    </citation>
    <scope>NUCLEOTIDE SEQUENCE [MRNA] OF 6-314 (ISOFORM 1)</scope>
    <scope>TISSUE SPECIFICITY</scope>
    <scope>GENE FAMILY</scope>
    <source>
        <strain>cv. Columbia</strain>
    </source>
</reference>
<reference key="7">
    <citation type="journal article" date="2002" name="Trends Plant Sci.">
        <title>bZIP transcription factors in Arabidopsis.</title>
        <authorList>
            <person name="Jakoby M."/>
            <person name="Weisshaar B."/>
            <person name="Droege-Laser W."/>
            <person name="Vicente-Carbajosa J."/>
            <person name="Tiedemann J."/>
            <person name="Kroj T."/>
            <person name="Parcy F."/>
        </authorList>
    </citation>
    <scope>GENE FAMILY</scope>
    <scope>NOMENCLATURE</scope>
</reference>
<reference key="8">
    <citation type="journal article" date="2004" name="Plant J.">
        <title>Visualization of protein interactions in living plant cells using bimolecular fluorescence complementation.</title>
        <authorList>
            <person name="Walter M."/>
            <person name="Chaban C."/>
            <person name="Schuetze K."/>
            <person name="Batistic O."/>
            <person name="Weckermann K."/>
            <person name="Naeke C."/>
            <person name="Blazevic D."/>
            <person name="Grefen C."/>
            <person name="Schumacher K."/>
            <person name="Oecking C."/>
            <person name="Harter K."/>
            <person name="Kudla J."/>
        </authorList>
    </citation>
    <scope>INTERACTION WITH LSD1</scope>
</reference>
<reference key="9">
    <citation type="journal article" date="2006" name="EMBO J.">
        <title>Combinatorial control of Arabidopsis proline dehydrogenase transcription by specific heterodimerisation of bZIP transcription factors.</title>
        <authorList>
            <person name="Weltmeier F."/>
            <person name="Ehlert A."/>
            <person name="Mayer C.S."/>
            <person name="Dietrich K."/>
            <person name="Wang X."/>
            <person name="Schuetze K."/>
            <person name="Alonso R."/>
            <person name="Harter K."/>
            <person name="Vicente-Carbajosa J."/>
            <person name="Droege-Laser W."/>
        </authorList>
    </citation>
    <scope>INTERACTION WITH BZIP53</scope>
</reference>
<reference key="10">
    <citation type="journal article" date="2006" name="EMBO J.">
        <title>bZIP10-LSD1 antagonism modulates basal defense and cell death in Arabidopsis following infection.</title>
        <authorList>
            <person name="Kaminaka H."/>
            <person name="Naeke C."/>
            <person name="Epple P."/>
            <person name="Dittgen J."/>
            <person name="Schuetze K."/>
            <person name="Chaban C."/>
            <person name="Holt B.F. III"/>
            <person name="Merkle T."/>
            <person name="Schaefer E."/>
            <person name="Harter K."/>
            <person name="Dangl J.L."/>
        </authorList>
    </citation>
    <scope>SUBCELLULAR LOCATION</scope>
</reference>
<reference key="11">
    <citation type="journal article" date="2006" name="Mol. Biol. Evol.">
        <title>Cross-species annotation of basic leucine zipper factor interactions: Insight into the evolution of closed interaction networks.</title>
        <authorList>
            <person name="Deppmann C.D."/>
            <person name="Alvania R.S."/>
            <person name="Taparowsky E.J."/>
        </authorList>
    </citation>
    <scope>SUBUNIT</scope>
</reference>
<reference key="12">
    <citation type="journal article" date="2006" name="Plant J.">
        <title>Two-hybrid protein-protein interaction analysis in Arabidopsis protoplasts: establishment of a heterodimerization map of group C and group S bZIP transcription factors.</title>
        <authorList>
            <person name="Ehlert A."/>
            <person name="Weltmeier F."/>
            <person name="Wang X."/>
            <person name="Mayer C.S."/>
            <person name="Smeekens S."/>
            <person name="Vicente-Carbajosa J."/>
            <person name="Droege-Laser W."/>
        </authorList>
    </citation>
    <scope>INTERACTION WITH BZIP1; BZIP2; BZIP9; BZIP10; BZIP11; BZIP44 AND BZIP53</scope>
</reference>
<reference key="13">
    <citation type="journal article" date="2009" name="Plant Mol. Biol.">
        <title>Expression patterns within the Arabidopsis C/S1 bZIP transcription factor network: availability of heterodimerization partners controls gene expression during stress response and development.</title>
        <authorList>
            <person name="Weltmeier F."/>
            <person name="Rahmani F."/>
            <person name="Ehlert A."/>
            <person name="Dietrich K."/>
            <person name="Schuetze K."/>
            <person name="Wang X."/>
            <person name="Chaban C."/>
            <person name="Hanson J."/>
            <person name="Teige M."/>
            <person name="Harter K."/>
            <person name="Vicente-Carbajosa J."/>
            <person name="Smeekens S."/>
            <person name="Droege-Laser W."/>
        </authorList>
    </citation>
    <scope>TISSUE SPECIFICITY</scope>
    <scope>DEVELOPMENTAL STAGE</scope>
    <scope>INDUCTION BY GLUCOSE</scope>
    <source>
        <strain>cv. Columbia</strain>
    </source>
</reference>
<reference key="14">
    <citation type="journal article" date="2010" name="Eur. J. Cell Biol.">
        <title>The role of phosphorylatable serine residues in the DNA-binding domain of Arabidopsis bZIP transcription factors.</title>
        <authorList>
            <person name="Kirchler T."/>
            <person name="Briesemeister S."/>
            <person name="Singer M."/>
            <person name="Schuetze K."/>
            <person name="Keinath M."/>
            <person name="Kohlbacher O."/>
            <person name="Vicente-Carbajosa J."/>
            <person name="Teige M."/>
            <person name="Harter K."/>
            <person name="Chaban C."/>
        </authorList>
    </citation>
    <scope>PHOSPHORYLATION</scope>
    <scope>MUTAGENESIS OF SER-160; SER-164 AND SER-168</scope>
</reference>
<reference key="15">
    <citation type="journal article" date="2010" name="Mol. Plant">
        <title>The arabidopsis bZIP1 transcription factor is involved in sugar signaling, protein networking, and DNA binding.</title>
        <authorList>
            <person name="Kang S.G."/>
            <person name="Price J."/>
            <person name="Lin P.-C."/>
            <person name="Hong J.C."/>
            <person name="Jang J.-C."/>
        </authorList>
    </citation>
    <scope>INTERACTION WITH BZIP1; BZIP10 AND BZIP25</scope>
    <scope>SUBUNIT</scope>
</reference>
<reference key="16">
    <citation type="journal article" date="2015" name="Elife">
        <title>SnRK1-triggered switch of bZIP63 dimerization mediates the low-energy response in plants.</title>
        <authorList>
            <person name="Mair A."/>
            <person name="Pedrotti L."/>
            <person name="Wurzinger B."/>
            <person name="Anrather D."/>
            <person name="Simeunovic A."/>
            <person name="Weiste C."/>
            <person name="Valerio C."/>
            <person name="Dietrich K."/>
            <person name="Kirchler T."/>
            <person name="Naegele T."/>
            <person name="Vicente Carbajosa J."/>
            <person name="Hanson J."/>
            <person name="Baena-Gonzalez E."/>
            <person name="Chaban C."/>
            <person name="Weckwerth W."/>
            <person name="Droege-Laser W."/>
            <person name="Teige M."/>
        </authorList>
    </citation>
    <scope>INTERACTION WITH KIN10; SNF4; BZIP1 AND BZIP11</scope>
    <scope>SUBUNIT</scope>
    <scope>PHOSPHORYLATION AT SER-29; SER-294 AND SER-300</scope>
    <scope>MUTAGENESIS OF SER-29; SER-294 AND SER-300</scope>
    <scope>FUNCTION</scope>
    <scope>DISRUPTION PHENOTYPE</scope>
    <scope>ACTIVITY REGULATION</scope>
</reference>
<reference key="17">
    <citation type="journal article" date="2018" name="Plant Cell">
        <title>Snf1-RELATED KINASE1-controlled C/S1-bZIP signaling activates alternative mitochondrial metabolic pathways to ensure plant survival in extended darkness.</title>
        <authorList>
            <person name="Pedrotti L."/>
            <person name="Weiste C."/>
            <person name="Naegele T."/>
            <person name="Wolf E."/>
            <person name="Lorenzin F."/>
            <person name="Dietrich K."/>
            <person name="Mair A."/>
            <person name="Weckwerth W."/>
            <person name="Teige M."/>
            <person name="Baena-Gonzalez E."/>
            <person name="Droege-Laser W."/>
        </authorList>
    </citation>
    <scope>MUTAGENESIS OF SER-29; SER-294 AND SER-300</scope>
    <scope>INTERACTION WITH KIN10 AND BZIP2</scope>
    <scope>FUNCTION</scope>
</reference>
<organism>
    <name type="scientific">Arabidopsis thaliana</name>
    <name type="common">Mouse-ear cress</name>
    <dbReference type="NCBI Taxonomy" id="3702"/>
    <lineage>
        <taxon>Eukaryota</taxon>
        <taxon>Viridiplantae</taxon>
        <taxon>Streptophyta</taxon>
        <taxon>Embryophyta</taxon>
        <taxon>Tracheophyta</taxon>
        <taxon>Spermatophyta</taxon>
        <taxon>Magnoliopsida</taxon>
        <taxon>eudicotyledons</taxon>
        <taxon>Gunneridae</taxon>
        <taxon>Pentapetalae</taxon>
        <taxon>rosids</taxon>
        <taxon>malvids</taxon>
        <taxon>Brassicales</taxon>
        <taxon>Brassicaceae</taxon>
        <taxon>Camelineae</taxon>
        <taxon>Arabidopsis</taxon>
    </lineage>
</organism>
<sequence>MEKVFSDEEISGNHHWSVNGMTSLNRSASEWAFNRFIQESSAAADDGESTTACGVSVSSPPNVPVDSEEYRAFLKSKLNLACAAVAMKRGTFIKPQDTSGRSDNGGANESEQASLASSKATPMMSSAITSGSELSGDEEEADGETNMNPTNVKRVKRMLSNRESARRSRRRKQAHLSELETQVSQLRVENSKLMKGLTDVTQTFNDASVENRVLKANIETLRAKVKMAEETVKRLTGFNPMFHNMPQIVSTVSLPSETSNSPDTTSSQVTTPEIISSGNKGKALIGCKMNRTASMRRVESLEHLQKRIRSVGDQ</sequence>
<proteinExistence type="evidence at protein level"/>
<name>BZP63_ARATH</name>
<keyword id="KW-0025">Alternative splicing</keyword>
<keyword id="KW-0238">DNA-binding</keyword>
<keyword id="KW-0539">Nucleus</keyword>
<keyword id="KW-0597">Phosphoprotein</keyword>
<keyword id="KW-1185">Reference proteome</keyword>
<keyword id="KW-0677">Repeat</keyword>
<keyword id="KW-0804">Transcription</keyword>
<keyword id="KW-0805">Transcription regulation</keyword>
<protein>
    <recommendedName>
        <fullName>Basic leucine zipper 63</fullName>
        <shortName>AtbZIP63</shortName>
        <shortName>bZIP protein 63</shortName>
    </recommendedName>
    <alternativeName>
        <fullName>Basic leucine zipper OPAQUE 2 homolog 3</fullName>
        <shortName>Basic leucine zipper O2 homolog 3</shortName>
    </alternativeName>
</protein>
<evidence type="ECO:0000250" key="1"/>
<evidence type="ECO:0000255" key="2">
    <source>
        <dbReference type="PROSITE-ProRule" id="PRU00978"/>
    </source>
</evidence>
<evidence type="ECO:0000256" key="3">
    <source>
        <dbReference type="SAM" id="MobiDB-lite"/>
    </source>
</evidence>
<evidence type="ECO:0000269" key="4">
    <source>
    </source>
</evidence>
<evidence type="ECO:0000269" key="5">
    <source>
    </source>
</evidence>
<evidence type="ECO:0000269" key="6">
    <source>
    </source>
</evidence>
<evidence type="ECO:0000269" key="7">
    <source>
    </source>
</evidence>
<evidence type="ECO:0000269" key="8">
    <source>
    </source>
</evidence>
<evidence type="ECO:0000269" key="9">
    <source>
    </source>
</evidence>
<evidence type="ECO:0000269" key="10">
    <source>
    </source>
</evidence>
<evidence type="ECO:0000269" key="11">
    <source>
    </source>
</evidence>
<evidence type="ECO:0000269" key="12">
    <source>
    </source>
</evidence>
<evidence type="ECO:0000269" key="13">
    <source>
    </source>
</evidence>
<evidence type="ECO:0000303" key="14">
    <source>
    </source>
</evidence>
<evidence type="ECO:0000305" key="15"/>